<evidence type="ECO:0000250" key="1"/>
<evidence type="ECO:0000250" key="2">
    <source>
        <dbReference type="UniProtKB" id="Q99816"/>
    </source>
</evidence>
<evidence type="ECO:0000255" key="3"/>
<evidence type="ECO:0000255" key="4">
    <source>
        <dbReference type="PROSITE-ProRule" id="PRU00644"/>
    </source>
</evidence>
<evidence type="ECO:0000255" key="5">
    <source>
        <dbReference type="PROSITE-ProRule" id="PRU00652"/>
    </source>
</evidence>
<evidence type="ECO:0000256" key="6">
    <source>
        <dbReference type="SAM" id="MobiDB-lite"/>
    </source>
</evidence>
<evidence type="ECO:0000269" key="7">
    <source>
    </source>
</evidence>
<evidence type="ECO:0000305" key="8"/>
<proteinExistence type="evidence at protein level"/>
<dbReference type="EMBL" id="AY293306">
    <property type="protein sequence ID" value="AAP45008.1"/>
    <property type="molecule type" value="mRNA"/>
</dbReference>
<dbReference type="EMBL" id="BC070951">
    <property type="protein sequence ID" value="AAH70951.1"/>
    <property type="molecule type" value="mRNA"/>
</dbReference>
<dbReference type="RefSeq" id="NP_853659.2">
    <property type="nucleotide sequence ID" value="NM_181628.2"/>
</dbReference>
<dbReference type="SMR" id="Q6IRE4"/>
<dbReference type="BioGRID" id="254034">
    <property type="interactions" value="3"/>
</dbReference>
<dbReference type="FunCoup" id="Q6IRE4">
    <property type="interactions" value="3081"/>
</dbReference>
<dbReference type="IntAct" id="Q6IRE4">
    <property type="interactions" value="1"/>
</dbReference>
<dbReference type="STRING" id="10116.ENSRNOP00000018194"/>
<dbReference type="GlyGen" id="Q6IRE4">
    <property type="glycosylation" value="1 site, 1 O-linked glycan (1 site)"/>
</dbReference>
<dbReference type="iPTMnet" id="Q6IRE4"/>
<dbReference type="PhosphoSitePlus" id="Q6IRE4"/>
<dbReference type="jPOST" id="Q6IRE4"/>
<dbReference type="PaxDb" id="10116-ENSRNOP00000018194"/>
<dbReference type="Ensembl" id="ENSRNOT00000112656.1">
    <property type="protein sequence ID" value="ENSRNOP00000080071.1"/>
    <property type="gene ID" value="ENSRNOG00000013381.7"/>
</dbReference>
<dbReference type="GeneID" id="292925"/>
<dbReference type="KEGG" id="rno:292925"/>
<dbReference type="UCSC" id="RGD:3909">
    <property type="organism name" value="rat"/>
</dbReference>
<dbReference type="AGR" id="RGD:3909"/>
<dbReference type="CTD" id="7251"/>
<dbReference type="RGD" id="3909">
    <property type="gene designation" value="Tsg101"/>
</dbReference>
<dbReference type="eggNOG" id="KOG2391">
    <property type="taxonomic scope" value="Eukaryota"/>
</dbReference>
<dbReference type="GeneTree" id="ENSGT00940000153903"/>
<dbReference type="HOGENOM" id="CLU_017548_1_1_1"/>
<dbReference type="InParanoid" id="Q6IRE4"/>
<dbReference type="OrthoDB" id="306304at2759"/>
<dbReference type="PhylomeDB" id="Q6IRE4"/>
<dbReference type="Reactome" id="R-RNO-917729">
    <property type="pathway name" value="Endosomal Sorting Complex Required For Transport (ESCRT)"/>
</dbReference>
<dbReference type="PRO" id="PR:Q6IRE4"/>
<dbReference type="Proteomes" id="UP000002494">
    <property type="component" value="Chromosome 1"/>
</dbReference>
<dbReference type="Bgee" id="ENSRNOG00000013381">
    <property type="expression patterns" value="Expressed in ovary and 20 other cell types or tissues"/>
</dbReference>
<dbReference type="GO" id="GO:0005813">
    <property type="term" value="C:centrosome"/>
    <property type="evidence" value="ECO:0007669"/>
    <property type="project" value="UniProtKB-SubCell"/>
</dbReference>
<dbReference type="GO" id="GO:0005737">
    <property type="term" value="C:cytoplasm"/>
    <property type="evidence" value="ECO:0000314"/>
    <property type="project" value="RGD"/>
</dbReference>
<dbReference type="GO" id="GO:0005769">
    <property type="term" value="C:early endosome"/>
    <property type="evidence" value="ECO:0000266"/>
    <property type="project" value="RGD"/>
</dbReference>
<dbReference type="GO" id="GO:0031901">
    <property type="term" value="C:early endosome membrane"/>
    <property type="evidence" value="ECO:0007669"/>
    <property type="project" value="UniProtKB-SubCell"/>
</dbReference>
<dbReference type="GO" id="GO:0005768">
    <property type="term" value="C:endosome"/>
    <property type="evidence" value="ECO:0000314"/>
    <property type="project" value="RGD"/>
</dbReference>
<dbReference type="GO" id="GO:0010008">
    <property type="term" value="C:endosome membrane"/>
    <property type="evidence" value="ECO:0000314"/>
    <property type="project" value="UniProtKB"/>
</dbReference>
<dbReference type="GO" id="GO:0000813">
    <property type="term" value="C:ESCRT I complex"/>
    <property type="evidence" value="ECO:0000250"/>
    <property type="project" value="UniProtKB"/>
</dbReference>
<dbReference type="GO" id="GO:0070062">
    <property type="term" value="C:extracellular exosome"/>
    <property type="evidence" value="ECO:0000266"/>
    <property type="project" value="RGD"/>
</dbReference>
<dbReference type="GO" id="GO:0090543">
    <property type="term" value="C:Flemming body"/>
    <property type="evidence" value="ECO:0007669"/>
    <property type="project" value="UniProtKB-SubCell"/>
</dbReference>
<dbReference type="GO" id="GO:0005770">
    <property type="term" value="C:late endosome"/>
    <property type="evidence" value="ECO:0000266"/>
    <property type="project" value="RGD"/>
</dbReference>
<dbReference type="GO" id="GO:0031902">
    <property type="term" value="C:late endosome membrane"/>
    <property type="evidence" value="ECO:0007669"/>
    <property type="project" value="UniProtKB-SubCell"/>
</dbReference>
<dbReference type="GO" id="GO:0005634">
    <property type="term" value="C:nucleus"/>
    <property type="evidence" value="ECO:0000314"/>
    <property type="project" value="RGD"/>
</dbReference>
<dbReference type="GO" id="GO:0005886">
    <property type="term" value="C:plasma membrane"/>
    <property type="evidence" value="ECO:0000266"/>
    <property type="project" value="RGD"/>
</dbReference>
<dbReference type="GO" id="GO:0048306">
    <property type="term" value="F:calcium-dependent protein binding"/>
    <property type="evidence" value="ECO:0000266"/>
    <property type="project" value="RGD"/>
</dbReference>
<dbReference type="GO" id="GO:0042803">
    <property type="term" value="F:protein homodimerization activity"/>
    <property type="evidence" value="ECO:0000266"/>
    <property type="project" value="RGD"/>
</dbReference>
<dbReference type="GO" id="GO:0044877">
    <property type="term" value="F:protein-containing complex binding"/>
    <property type="evidence" value="ECO:0000266"/>
    <property type="project" value="RGD"/>
</dbReference>
<dbReference type="GO" id="GO:0003714">
    <property type="term" value="F:transcription corepressor activity"/>
    <property type="evidence" value="ECO:0000266"/>
    <property type="project" value="RGD"/>
</dbReference>
<dbReference type="GO" id="GO:0043130">
    <property type="term" value="F:ubiquitin binding"/>
    <property type="evidence" value="ECO:0000266"/>
    <property type="project" value="RGD"/>
</dbReference>
<dbReference type="GO" id="GO:0031625">
    <property type="term" value="F:ubiquitin protein ligase binding"/>
    <property type="evidence" value="ECO:0000266"/>
    <property type="project" value="RGD"/>
</dbReference>
<dbReference type="GO" id="GO:0046790">
    <property type="term" value="F:virion binding"/>
    <property type="evidence" value="ECO:0000266"/>
    <property type="project" value="RGD"/>
</dbReference>
<dbReference type="GO" id="GO:0030154">
    <property type="term" value="P:cell differentiation"/>
    <property type="evidence" value="ECO:0000266"/>
    <property type="project" value="RGD"/>
</dbReference>
<dbReference type="GO" id="GO:0051301">
    <property type="term" value="P:cell division"/>
    <property type="evidence" value="ECO:0007669"/>
    <property type="project" value="UniProtKB-KW"/>
</dbReference>
<dbReference type="GO" id="GO:0008333">
    <property type="term" value="P:endosome to lysosome transport"/>
    <property type="evidence" value="ECO:0000315"/>
    <property type="project" value="RGD"/>
</dbReference>
<dbReference type="GO" id="GO:1990182">
    <property type="term" value="P:exosomal secretion"/>
    <property type="evidence" value="ECO:0000266"/>
    <property type="project" value="RGD"/>
</dbReference>
<dbReference type="GO" id="GO:0006858">
    <property type="term" value="P:extracellular transport"/>
    <property type="evidence" value="ECO:0000266"/>
    <property type="project" value="RGD"/>
</dbReference>
<dbReference type="GO" id="GO:0030216">
    <property type="term" value="P:keratinocyte differentiation"/>
    <property type="evidence" value="ECO:0000266"/>
    <property type="project" value="RGD"/>
</dbReference>
<dbReference type="GO" id="GO:0008285">
    <property type="term" value="P:negative regulation of cell population proliferation"/>
    <property type="evidence" value="ECO:0000266"/>
    <property type="project" value="RGD"/>
</dbReference>
<dbReference type="GO" id="GO:0042059">
    <property type="term" value="P:negative regulation of epidermal growth factor receptor signaling pathway"/>
    <property type="evidence" value="ECO:0000266"/>
    <property type="project" value="RGD"/>
</dbReference>
<dbReference type="GO" id="GO:0000122">
    <property type="term" value="P:negative regulation of transcription by RNA polymerase II"/>
    <property type="evidence" value="ECO:0000266"/>
    <property type="project" value="RGD"/>
</dbReference>
<dbReference type="GO" id="GO:0045893">
    <property type="term" value="P:positive regulation of DNA-templated transcription"/>
    <property type="evidence" value="ECO:0000314"/>
    <property type="project" value="RGD"/>
</dbReference>
<dbReference type="GO" id="GO:1903543">
    <property type="term" value="P:positive regulation of exosomal secretion"/>
    <property type="evidence" value="ECO:0000266"/>
    <property type="project" value="RGD"/>
</dbReference>
<dbReference type="GO" id="GO:1902527">
    <property type="term" value="P:positive regulation of protein monoubiquitination"/>
    <property type="evidence" value="ECO:0000314"/>
    <property type="project" value="RGD"/>
</dbReference>
<dbReference type="GO" id="GO:2000397">
    <property type="term" value="P:positive regulation of ubiquitin-dependent endocytosis"/>
    <property type="evidence" value="ECO:0000266"/>
    <property type="project" value="RGD"/>
</dbReference>
<dbReference type="GO" id="GO:1903774">
    <property type="term" value="P:positive regulation of viral budding via host ESCRT complex"/>
    <property type="evidence" value="ECO:0000266"/>
    <property type="project" value="RGD"/>
</dbReference>
<dbReference type="GO" id="GO:0036211">
    <property type="term" value="P:protein modification process"/>
    <property type="evidence" value="ECO:0007669"/>
    <property type="project" value="InterPro"/>
</dbReference>
<dbReference type="GO" id="GO:0015031">
    <property type="term" value="P:protein transport"/>
    <property type="evidence" value="ECO:0007669"/>
    <property type="project" value="UniProtKB-KW"/>
</dbReference>
<dbReference type="GO" id="GO:0051726">
    <property type="term" value="P:regulation of cell cycle"/>
    <property type="evidence" value="ECO:0000266"/>
    <property type="project" value="RGD"/>
</dbReference>
<dbReference type="GO" id="GO:0001558">
    <property type="term" value="P:regulation of cell growth"/>
    <property type="evidence" value="ECO:0000266"/>
    <property type="project" value="RGD"/>
</dbReference>
<dbReference type="GO" id="GO:1903551">
    <property type="term" value="P:regulation of extracellular exosome assembly"/>
    <property type="evidence" value="ECO:0000266"/>
    <property type="project" value="RGD"/>
</dbReference>
<dbReference type="GO" id="GO:0043162">
    <property type="term" value="P:ubiquitin-dependent protein catabolic process via the multivesicular body sorting pathway"/>
    <property type="evidence" value="ECO:0000250"/>
    <property type="project" value="UniProtKB"/>
</dbReference>
<dbReference type="GO" id="GO:0046755">
    <property type="term" value="P:viral budding"/>
    <property type="evidence" value="ECO:0000250"/>
    <property type="project" value="UniProtKB"/>
</dbReference>
<dbReference type="CDD" id="cd11685">
    <property type="entry name" value="UEV_TSG101-like"/>
    <property type="match status" value="1"/>
</dbReference>
<dbReference type="FunFam" id="3.10.110.10:FF:000040">
    <property type="entry name" value="tumor susceptibility gene 101 protein"/>
    <property type="match status" value="1"/>
</dbReference>
<dbReference type="Gene3D" id="6.10.140.820">
    <property type="match status" value="1"/>
</dbReference>
<dbReference type="Gene3D" id="6.10.250.370">
    <property type="match status" value="1"/>
</dbReference>
<dbReference type="Gene3D" id="3.10.110.10">
    <property type="entry name" value="Ubiquitin Conjugating Enzyme"/>
    <property type="match status" value="1"/>
</dbReference>
<dbReference type="InterPro" id="IPR052070">
    <property type="entry name" value="ESCRT-I_UEV_domain"/>
</dbReference>
<dbReference type="InterPro" id="IPR037202">
    <property type="entry name" value="ESCRT_assembly_dom"/>
</dbReference>
<dbReference type="InterPro" id="IPR017916">
    <property type="entry name" value="SB_dom"/>
</dbReference>
<dbReference type="InterPro" id="IPR016135">
    <property type="entry name" value="UBQ-conjugating_enzyme/RWD"/>
</dbReference>
<dbReference type="InterPro" id="IPR008883">
    <property type="entry name" value="UEV_N"/>
</dbReference>
<dbReference type="PANTHER" id="PTHR23306:SF17">
    <property type="entry name" value="TUMOR SUSCEPTIBILITY GENE 101 PROTEIN"/>
    <property type="match status" value="1"/>
</dbReference>
<dbReference type="PANTHER" id="PTHR23306">
    <property type="entry name" value="TUMOR SUSCEPTIBILITY GENE 101 PROTEIN-RELATED"/>
    <property type="match status" value="1"/>
</dbReference>
<dbReference type="Pfam" id="PF05743">
    <property type="entry name" value="UEV"/>
    <property type="match status" value="1"/>
</dbReference>
<dbReference type="Pfam" id="PF09454">
    <property type="entry name" value="Vps23_core"/>
    <property type="match status" value="1"/>
</dbReference>
<dbReference type="SMART" id="SM00212">
    <property type="entry name" value="UBCc"/>
    <property type="match status" value="1"/>
</dbReference>
<dbReference type="SUPFAM" id="SSF140111">
    <property type="entry name" value="Endosomal sorting complex assembly domain"/>
    <property type="match status" value="1"/>
</dbReference>
<dbReference type="SUPFAM" id="SSF54495">
    <property type="entry name" value="UBC-like"/>
    <property type="match status" value="1"/>
</dbReference>
<dbReference type="PROSITE" id="PS51312">
    <property type="entry name" value="SB"/>
    <property type="match status" value="1"/>
</dbReference>
<dbReference type="PROSITE" id="PS51322">
    <property type="entry name" value="UEV"/>
    <property type="match status" value="1"/>
</dbReference>
<name>TS101_RAT</name>
<accession>Q6IRE4</accession>
<accession>Q7TSE5</accession>
<reference key="1">
    <citation type="journal article" date="2004" name="J. Biol. Chem.">
        <title>TSG101 interacts with apoptosis-antagonizing transcription factor and enhances androgen receptor-mediated transcription by promoting its monoubiquitination.</title>
        <authorList>
            <person name="Burgdorf S."/>
            <person name="Leister P."/>
            <person name="Scheidtmann K.H."/>
        </authorList>
    </citation>
    <scope>NUCLEOTIDE SEQUENCE [MRNA]</scope>
    <scope>INTERACTION WITH AATF</scope>
    <source>
        <strain>Fischer 344</strain>
    </source>
</reference>
<reference key="2">
    <citation type="journal article" date="2004" name="Genome Res.">
        <title>The status, quality, and expansion of the NIH full-length cDNA project: the Mammalian Gene Collection (MGC).</title>
        <authorList>
            <consortium name="The MGC Project Team"/>
        </authorList>
    </citation>
    <scope>NUCLEOTIDE SEQUENCE [LARGE SCALE MRNA]</scope>
    <source>
        <tissue>Lung</tissue>
    </source>
</reference>
<organism>
    <name type="scientific">Rattus norvegicus</name>
    <name type="common">Rat</name>
    <dbReference type="NCBI Taxonomy" id="10116"/>
    <lineage>
        <taxon>Eukaryota</taxon>
        <taxon>Metazoa</taxon>
        <taxon>Chordata</taxon>
        <taxon>Craniata</taxon>
        <taxon>Vertebrata</taxon>
        <taxon>Euteleostomi</taxon>
        <taxon>Mammalia</taxon>
        <taxon>Eutheria</taxon>
        <taxon>Euarchontoglires</taxon>
        <taxon>Glires</taxon>
        <taxon>Rodentia</taxon>
        <taxon>Myomorpha</taxon>
        <taxon>Muroidea</taxon>
        <taxon>Muridae</taxon>
        <taxon>Murinae</taxon>
        <taxon>Rattus</taxon>
    </lineage>
</organism>
<keyword id="KW-0007">Acetylation</keyword>
<keyword id="KW-0131">Cell cycle</keyword>
<keyword id="KW-0132">Cell division</keyword>
<keyword id="KW-0175">Coiled coil</keyword>
<keyword id="KW-0963">Cytoplasm</keyword>
<keyword id="KW-0206">Cytoskeleton</keyword>
<keyword id="KW-0967">Endosome</keyword>
<keyword id="KW-0341">Growth regulation</keyword>
<keyword id="KW-0472">Membrane</keyword>
<keyword id="KW-0539">Nucleus</keyword>
<keyword id="KW-0597">Phosphoprotein</keyword>
<keyword id="KW-0653">Protein transport</keyword>
<keyword id="KW-1185">Reference proteome</keyword>
<keyword id="KW-0813">Transport</keyword>
<keyword id="KW-0832">Ubl conjugation</keyword>
<gene>
    <name type="primary">Tsg101</name>
</gene>
<sequence length="391" mass="44078">MAVSESQLKKMMSKYKYRDLTVRQTVNVIAMYKDLKPVLDSYVFNDGSSRELVNLTGTIPVRYRGNIYNIPICLWLLDTYPYNPPICFVKPTSSMTIKTGKHVDANGKIYLPYLHDWKHPRSELLELIQIMIVIFGEEPPVFSRPTVSASYPPYTAAGPPNTSYLPSMPSGISAYPSGYPPNPSGYPGCPYPPAGPYPATTSSQYPSQPPVTTAGPSRDGTISEDTIRASLISAVSDKLRWRMKEEMDGAQAELNALKRTEEDLKKGHQKLEEMVTRLDQEVAEVDKNIELLKKKDEELSSALEKMENQSENNDIDEVIIPTAPLYKQILNLYAEENAIEDTIFYLGEALRRGVIDLDVFLKHVRLLSRKQFQLRALMQKARKTAGLSDLY</sequence>
<comment type="function">
    <text evidence="2">Component of the ESCRT-I complex, a regulator of vesicular trafficking process. Binds to ubiquitinated cargo proteins and is required for the sorting of endocytic ubiquitinated cargos into multivesicular bodies (MVBs). Mediates the association between the ESCRT-0 and ESCRT-I complex. Required for completion of cytokinesis; the function requires CEP55. May be involved in cell growth and differentiation. Acts as a negative growth regulator. Required for the exosomal release of SDCBP, CD63 and syndecan (By similarity). It may also play a role in the extracellular release of microvesicles that differ from the exosomes (By similarity).</text>
</comment>
<comment type="subunit">
    <text evidence="1 2 7">Component of the ESCRT-I complex (endosomal sorting complex required for transport I) which consists of TSG101, VPS28, a VPS37 protein (VPS37A to -D) and MVB12A or MVB12B in a 1:1:1:1 stoichiometry. Interacts with VPS37A, VPS37B and VPS37C. Interacts with DMAP1. Interacts with ubiquitin (By similarity). Interacts with AATF (PubMed:14761944). Interacts with stathmin and GMCL (By similarity). Component of an ESCRT-I complex (endosomal sorting complex required for transport I) which consists of TSG101, VPS28, VPS37A and UBAP1 in a 1:1:1:1 stoichiometry. Interacts with HGS; the interaction mediates the association with the ESCRT-0 complex. Interacts with GGA1 and GGA3. Interacts (via UEV domain) with PDCD6IP/AIP1. Interacts with VPS28, SNF8 and VPS36. Self-associates. Interacts with MVB12A; the association appears to be mediated by the TSG101-VPS37 binary subcomplex. Interacts with VPS37D. Interacts with LRSAM1. Interacts with CEP55; the interaction is required for cytokinesis. Interacts with PDCD6. Interacts with LITAF. Interacts with MGRN1 (By similarity). Interacts with ARRDC1; recruits TSG101 to the plasma membrane (By similarity).</text>
</comment>
<comment type="subcellular location">
    <subcellularLocation>
        <location evidence="2">Cytoplasm</location>
    </subcellularLocation>
    <subcellularLocation>
        <location evidence="2">Early endosome membrane</location>
        <topology evidence="2">Peripheral membrane protein</topology>
        <orientation evidence="2">Cytoplasmic side</orientation>
    </subcellularLocation>
    <subcellularLocation>
        <location evidence="2">Late endosome membrane</location>
        <topology evidence="2">Peripheral membrane protein</topology>
    </subcellularLocation>
    <subcellularLocation>
        <location evidence="2">Cytoplasm</location>
        <location evidence="2">Cytoskeleton</location>
        <location evidence="2">Microtubule organizing center</location>
        <location evidence="2">Centrosome</location>
    </subcellularLocation>
    <subcellularLocation>
        <location evidence="2">Midbody</location>
        <location evidence="2">Midbody ring</location>
    </subcellularLocation>
    <subcellularLocation>
        <location evidence="2">Nucleus</location>
    </subcellularLocation>
    <text evidence="2">Mainly cytoplasmic. Membrane-associated when active and soluble when inactive. Nuclear localization is cell cycle-dependent. Interaction with CEP55 is required for localization to the midbody during cytokinesis.</text>
</comment>
<comment type="domain">
    <text evidence="1">The UEV domain is required for the interaction of the complex with ubiquitin.</text>
</comment>
<comment type="domain">
    <text evidence="1">The coiled coil domain may interact with stathmin.</text>
</comment>
<comment type="PTM">
    <text evidence="2">Monoubiquitinated at multiple sites by LRSAM1 and by MGRN1. Ubiquitination inactivates it, possibly by regulating its shuttling between an active membrane-bound protein and an inactive soluble form. Ubiquitination by MGRN1 requires the presence of UBE2D1.</text>
</comment>
<comment type="similarity">
    <text evidence="8">Belongs to the ubiquitin-conjugating enzyme family. UEV subfamily.</text>
</comment>
<protein>
    <recommendedName>
        <fullName>Tumor susceptibility gene 101 protein</fullName>
    </recommendedName>
    <alternativeName>
        <fullName>ESCRT-I complex subunit TSG101</fullName>
    </alternativeName>
</protein>
<feature type="initiator methionine" description="Removed" evidence="2">
    <location>
        <position position="1"/>
    </location>
</feature>
<feature type="chain" id="PRO_0000082608" description="Tumor susceptibility gene 101 protein">
    <location>
        <begin position="2"/>
        <end position="391"/>
    </location>
</feature>
<feature type="domain" description="UEV" evidence="5">
    <location>
        <begin position="2"/>
        <end position="145"/>
    </location>
</feature>
<feature type="domain" description="SB" evidence="4">
    <location>
        <begin position="323"/>
        <end position="391"/>
    </location>
</feature>
<feature type="region of interest" description="Interaction with CEP55" evidence="1">
    <location>
        <begin position="159"/>
        <end position="163"/>
    </location>
</feature>
<feature type="region of interest" description="Disordered" evidence="6">
    <location>
        <begin position="195"/>
        <end position="222"/>
    </location>
</feature>
<feature type="coiled-coil region" evidence="3">
    <location>
        <begin position="238"/>
        <end position="317"/>
    </location>
</feature>
<feature type="short sequence motif" description="PTAP motif">
    <location>
        <begin position="321"/>
        <end position="324"/>
    </location>
</feature>
<feature type="compositionally biased region" description="Polar residues" evidence="6">
    <location>
        <begin position="200"/>
        <end position="215"/>
    </location>
</feature>
<feature type="modified residue" description="N-acetylalanine" evidence="2">
    <location>
        <position position="2"/>
    </location>
</feature>
<feature type="modified residue" description="Phosphothreonine" evidence="2">
    <location>
        <position position="221"/>
    </location>
</feature>
<feature type="sequence conflict" description="In Ref. 1; AAP45008." evidence="8" ref="1">
    <original>N</original>
    <variation>S</variation>
    <location>
        <position position="45"/>
    </location>
</feature>
<feature type="sequence conflict" description="In Ref. 1; AAP45008." evidence="8" ref="1">
    <original>V</original>
    <variation>A</variation>
    <location>
        <position position="89"/>
    </location>
</feature>
<feature type="sequence conflict" description="In Ref. 1; AAP45008." evidence="8" ref="1">
    <original>S</original>
    <variation>F</variation>
    <location>
        <position position="150"/>
    </location>
</feature>
<feature type="sequence conflict" description="In Ref. 1; AAP45008." evidence="8" ref="1">
    <original>A</original>
    <variation>V</variation>
    <location>
        <position position="174"/>
    </location>
</feature>
<feature type="sequence conflict" description="In Ref. 1; AAP45008." evidence="8" ref="1">
    <original>E</original>
    <variation>D</variation>
    <location>
        <position position="311"/>
    </location>
</feature>